<protein>
    <recommendedName>
        <fullName evidence="1">NAD kinase</fullName>
        <ecNumber evidence="1">2.7.1.23</ecNumber>
    </recommendedName>
    <alternativeName>
        <fullName evidence="1">ATP-dependent NAD kinase</fullName>
    </alternativeName>
</protein>
<evidence type="ECO:0000255" key="1">
    <source>
        <dbReference type="HAMAP-Rule" id="MF_00361"/>
    </source>
</evidence>
<name>NADK_ECODH</name>
<reference key="1">
    <citation type="journal article" date="2008" name="J. Bacteriol.">
        <title>The complete genome sequence of Escherichia coli DH10B: insights into the biology of a laboratory workhorse.</title>
        <authorList>
            <person name="Durfee T."/>
            <person name="Nelson R."/>
            <person name="Baldwin S."/>
            <person name="Plunkett G. III"/>
            <person name="Burland V."/>
            <person name="Mau B."/>
            <person name="Petrosino J.F."/>
            <person name="Qin X."/>
            <person name="Muzny D.M."/>
            <person name="Ayele M."/>
            <person name="Gibbs R.A."/>
            <person name="Csorgo B."/>
            <person name="Posfai G."/>
            <person name="Weinstock G.M."/>
            <person name="Blattner F.R."/>
        </authorList>
    </citation>
    <scope>NUCLEOTIDE SEQUENCE [LARGE SCALE GENOMIC DNA]</scope>
    <source>
        <strain>K12 / DH10B</strain>
    </source>
</reference>
<keyword id="KW-0067">ATP-binding</keyword>
<keyword id="KW-0963">Cytoplasm</keyword>
<keyword id="KW-0418">Kinase</keyword>
<keyword id="KW-0520">NAD</keyword>
<keyword id="KW-0521">NADP</keyword>
<keyword id="KW-0547">Nucleotide-binding</keyword>
<keyword id="KW-0808">Transferase</keyword>
<feature type="chain" id="PRO_1000120856" description="NAD kinase">
    <location>
        <begin position="1"/>
        <end position="292"/>
    </location>
</feature>
<feature type="active site" description="Proton acceptor" evidence="1">
    <location>
        <position position="73"/>
    </location>
</feature>
<feature type="binding site" evidence="1">
    <location>
        <begin position="73"/>
        <end position="74"/>
    </location>
    <ligand>
        <name>NAD(+)</name>
        <dbReference type="ChEBI" id="CHEBI:57540"/>
    </ligand>
</feature>
<feature type="binding site" evidence="1">
    <location>
        <begin position="147"/>
        <end position="148"/>
    </location>
    <ligand>
        <name>NAD(+)</name>
        <dbReference type="ChEBI" id="CHEBI:57540"/>
    </ligand>
</feature>
<feature type="binding site" evidence="1">
    <location>
        <position position="158"/>
    </location>
    <ligand>
        <name>NAD(+)</name>
        <dbReference type="ChEBI" id="CHEBI:57540"/>
    </ligand>
</feature>
<feature type="binding site" evidence="1">
    <location>
        <position position="175"/>
    </location>
    <ligand>
        <name>NAD(+)</name>
        <dbReference type="ChEBI" id="CHEBI:57540"/>
    </ligand>
</feature>
<feature type="binding site" evidence="1">
    <location>
        <position position="177"/>
    </location>
    <ligand>
        <name>NAD(+)</name>
        <dbReference type="ChEBI" id="CHEBI:57540"/>
    </ligand>
</feature>
<feature type="binding site" evidence="1">
    <location>
        <begin position="188"/>
        <end position="193"/>
    </location>
    <ligand>
        <name>NAD(+)</name>
        <dbReference type="ChEBI" id="CHEBI:57540"/>
    </ligand>
</feature>
<feature type="binding site" evidence="1">
    <location>
        <position position="247"/>
    </location>
    <ligand>
        <name>NAD(+)</name>
        <dbReference type="ChEBI" id="CHEBI:57540"/>
    </ligand>
</feature>
<sequence>MNNHFKCIGIVGHPRHPTALTTHEMLYRWLCTKGYEVIVEQQIAHELQLKNVKTGTLAEIGQLADLAVVVGGDGNMLGAARTLARYDIKVIGINRGNLGFLTDLDPDNAQQQLADVLEGHYISEKRFLLEAQVCQQDCQKRISTAINEVVLHPGKVAHMIEFEVYIDEIFAFSQRSDGLIISTPTGSTAYSLSAGGPILTPSLDAITLVPMFPHTLSARPLVINSSSTIRLRFSHRRNDLEISCDSQIALPIQEGEDVLIRRCDYHLNLIHPKDYSYFNTLSTKLGWSKKLF</sequence>
<gene>
    <name evidence="1" type="primary">nadK</name>
    <name type="ordered locus">ECDH10B_2781</name>
</gene>
<accession>B1XBT5</accession>
<comment type="function">
    <text evidence="1">Involved in the regulation of the intracellular balance of NAD and NADP, and is a key enzyme in the biosynthesis of NADP. Catalyzes specifically the phosphorylation on 2'-hydroxyl of the adenosine moiety of NAD to yield NADP.</text>
</comment>
<comment type="catalytic activity">
    <reaction evidence="1">
        <text>NAD(+) + ATP = ADP + NADP(+) + H(+)</text>
        <dbReference type="Rhea" id="RHEA:18629"/>
        <dbReference type="ChEBI" id="CHEBI:15378"/>
        <dbReference type="ChEBI" id="CHEBI:30616"/>
        <dbReference type="ChEBI" id="CHEBI:57540"/>
        <dbReference type="ChEBI" id="CHEBI:58349"/>
        <dbReference type="ChEBI" id="CHEBI:456216"/>
        <dbReference type="EC" id="2.7.1.23"/>
    </reaction>
</comment>
<comment type="cofactor">
    <cofactor evidence="1">
        <name>a divalent metal cation</name>
        <dbReference type="ChEBI" id="CHEBI:60240"/>
    </cofactor>
</comment>
<comment type="subcellular location">
    <subcellularLocation>
        <location evidence="1">Cytoplasm</location>
    </subcellularLocation>
</comment>
<comment type="similarity">
    <text evidence="1">Belongs to the NAD kinase family.</text>
</comment>
<organism>
    <name type="scientific">Escherichia coli (strain K12 / DH10B)</name>
    <dbReference type="NCBI Taxonomy" id="316385"/>
    <lineage>
        <taxon>Bacteria</taxon>
        <taxon>Pseudomonadati</taxon>
        <taxon>Pseudomonadota</taxon>
        <taxon>Gammaproteobacteria</taxon>
        <taxon>Enterobacterales</taxon>
        <taxon>Enterobacteriaceae</taxon>
        <taxon>Escherichia</taxon>
    </lineage>
</organism>
<dbReference type="EC" id="2.7.1.23" evidence="1"/>
<dbReference type="EMBL" id="CP000948">
    <property type="protein sequence ID" value="ACB03759.1"/>
    <property type="molecule type" value="Genomic_DNA"/>
</dbReference>
<dbReference type="RefSeq" id="WP_001059169.1">
    <property type="nucleotide sequence ID" value="NC_010473.1"/>
</dbReference>
<dbReference type="SMR" id="B1XBT5"/>
<dbReference type="GeneID" id="93774464"/>
<dbReference type="KEGG" id="ecd:ECDH10B_2781"/>
<dbReference type="HOGENOM" id="CLU_008831_0_1_6"/>
<dbReference type="GO" id="GO:0005737">
    <property type="term" value="C:cytoplasm"/>
    <property type="evidence" value="ECO:0007669"/>
    <property type="project" value="UniProtKB-SubCell"/>
</dbReference>
<dbReference type="GO" id="GO:0005524">
    <property type="term" value="F:ATP binding"/>
    <property type="evidence" value="ECO:0007669"/>
    <property type="project" value="UniProtKB-KW"/>
</dbReference>
<dbReference type="GO" id="GO:0046872">
    <property type="term" value="F:metal ion binding"/>
    <property type="evidence" value="ECO:0007669"/>
    <property type="project" value="UniProtKB-UniRule"/>
</dbReference>
<dbReference type="GO" id="GO:0051287">
    <property type="term" value="F:NAD binding"/>
    <property type="evidence" value="ECO:0007669"/>
    <property type="project" value="UniProtKB-ARBA"/>
</dbReference>
<dbReference type="GO" id="GO:0003951">
    <property type="term" value="F:NAD+ kinase activity"/>
    <property type="evidence" value="ECO:0007669"/>
    <property type="project" value="UniProtKB-UniRule"/>
</dbReference>
<dbReference type="GO" id="GO:0019674">
    <property type="term" value="P:NAD metabolic process"/>
    <property type="evidence" value="ECO:0007669"/>
    <property type="project" value="InterPro"/>
</dbReference>
<dbReference type="GO" id="GO:0006741">
    <property type="term" value="P:NADP biosynthetic process"/>
    <property type="evidence" value="ECO:0007669"/>
    <property type="project" value="UniProtKB-UniRule"/>
</dbReference>
<dbReference type="FunFam" id="2.60.200.30:FF:000001">
    <property type="entry name" value="NAD kinase"/>
    <property type="match status" value="1"/>
</dbReference>
<dbReference type="FunFam" id="3.40.50.10330:FF:000004">
    <property type="entry name" value="NAD kinase"/>
    <property type="match status" value="1"/>
</dbReference>
<dbReference type="Gene3D" id="3.40.50.10330">
    <property type="entry name" value="Probable inorganic polyphosphate/atp-NAD kinase, domain 1"/>
    <property type="match status" value="1"/>
</dbReference>
<dbReference type="Gene3D" id="2.60.200.30">
    <property type="entry name" value="Probable inorganic polyphosphate/atp-NAD kinase, domain 2"/>
    <property type="match status" value="1"/>
</dbReference>
<dbReference type="HAMAP" id="MF_00361">
    <property type="entry name" value="NAD_kinase"/>
    <property type="match status" value="1"/>
</dbReference>
<dbReference type="InterPro" id="IPR017438">
    <property type="entry name" value="ATP-NAD_kinase_N"/>
</dbReference>
<dbReference type="InterPro" id="IPR017437">
    <property type="entry name" value="ATP-NAD_kinase_PpnK-typ_C"/>
</dbReference>
<dbReference type="InterPro" id="IPR016064">
    <property type="entry name" value="NAD/diacylglycerol_kinase_sf"/>
</dbReference>
<dbReference type="InterPro" id="IPR002504">
    <property type="entry name" value="NADK"/>
</dbReference>
<dbReference type="NCBIfam" id="NF002306">
    <property type="entry name" value="PRK01231.1"/>
    <property type="match status" value="1"/>
</dbReference>
<dbReference type="NCBIfam" id="NF002893">
    <property type="entry name" value="PRK03378.1"/>
    <property type="match status" value="1"/>
</dbReference>
<dbReference type="PANTHER" id="PTHR20275">
    <property type="entry name" value="NAD KINASE"/>
    <property type="match status" value="1"/>
</dbReference>
<dbReference type="PANTHER" id="PTHR20275:SF0">
    <property type="entry name" value="NAD KINASE"/>
    <property type="match status" value="1"/>
</dbReference>
<dbReference type="Pfam" id="PF01513">
    <property type="entry name" value="NAD_kinase"/>
    <property type="match status" value="1"/>
</dbReference>
<dbReference type="Pfam" id="PF20143">
    <property type="entry name" value="NAD_kinase_C"/>
    <property type="match status" value="1"/>
</dbReference>
<dbReference type="SUPFAM" id="SSF111331">
    <property type="entry name" value="NAD kinase/diacylglycerol kinase-like"/>
    <property type="match status" value="1"/>
</dbReference>
<proteinExistence type="inferred from homology"/>